<accession>A5IIP2</accession>
<organism>
    <name type="scientific">Thermotoga petrophila (strain ATCC BAA-488 / DSM 13995 / JCM 10881 / RKU-1)</name>
    <dbReference type="NCBI Taxonomy" id="390874"/>
    <lineage>
        <taxon>Bacteria</taxon>
        <taxon>Thermotogati</taxon>
        <taxon>Thermotogota</taxon>
        <taxon>Thermotogae</taxon>
        <taxon>Thermotogales</taxon>
        <taxon>Thermotogaceae</taxon>
        <taxon>Thermotoga</taxon>
    </lineage>
</organism>
<proteinExistence type="inferred from homology"/>
<sequence length="344" mass="37759">MRKSVKVGNVVIGGGAPVSVQSMTTTKTADVERTISQIKRLERAGCEIIRVAVQDEEDAKAIRRIKEQIEIPLVADIQFDYRLAILSIDNGADKIRINPGNMSRDRLKDVVAAAKGKGIPIRVGANVGSIKRRTSERWKDLAESALEEVRLLEKEGFYDIVVSVKSSDILETIKANEYIAEKIEYPIHLGVTEAGVSETAVVKSSIAIGHLLLKNIGDTIRVSISGDPVREVIVGKKILIALGLREGVEVIACPTCGRAEIDVENMAKMIEENFFHVQKRLKIAVMGCVVNGIGEGKDADLGVAGLRDGAVIFVKGEIKERVSKEFVLERLKHYLNELLEEVER</sequence>
<keyword id="KW-0004">4Fe-4S</keyword>
<keyword id="KW-0408">Iron</keyword>
<keyword id="KW-0411">Iron-sulfur</keyword>
<keyword id="KW-0414">Isoprene biosynthesis</keyword>
<keyword id="KW-0479">Metal-binding</keyword>
<keyword id="KW-0560">Oxidoreductase</keyword>
<comment type="function">
    <text evidence="1">Converts 2C-methyl-D-erythritol 2,4-cyclodiphosphate (ME-2,4cPP) into 1-hydroxy-2-methyl-2-(E)-butenyl 4-diphosphate.</text>
</comment>
<comment type="catalytic activity">
    <reaction evidence="1">
        <text>(2E)-4-hydroxy-3-methylbut-2-enyl diphosphate + oxidized [flavodoxin] + H2O + 2 H(+) = 2-C-methyl-D-erythritol 2,4-cyclic diphosphate + reduced [flavodoxin]</text>
        <dbReference type="Rhea" id="RHEA:43604"/>
        <dbReference type="Rhea" id="RHEA-COMP:10622"/>
        <dbReference type="Rhea" id="RHEA-COMP:10623"/>
        <dbReference type="ChEBI" id="CHEBI:15377"/>
        <dbReference type="ChEBI" id="CHEBI:15378"/>
        <dbReference type="ChEBI" id="CHEBI:57618"/>
        <dbReference type="ChEBI" id="CHEBI:58210"/>
        <dbReference type="ChEBI" id="CHEBI:58483"/>
        <dbReference type="ChEBI" id="CHEBI:128753"/>
        <dbReference type="EC" id="1.17.7.3"/>
    </reaction>
</comment>
<comment type="cofactor">
    <cofactor evidence="1">
        <name>[4Fe-4S] cluster</name>
        <dbReference type="ChEBI" id="CHEBI:49883"/>
    </cofactor>
    <text evidence="1">Binds 1 [4Fe-4S] cluster.</text>
</comment>
<comment type="pathway">
    <text evidence="1">Isoprenoid biosynthesis; isopentenyl diphosphate biosynthesis via DXP pathway; isopentenyl diphosphate from 1-deoxy-D-xylulose 5-phosphate: step 5/6.</text>
</comment>
<comment type="similarity">
    <text evidence="1">Belongs to the IspG family.</text>
</comment>
<feature type="chain" id="PRO_1000011538" description="4-hydroxy-3-methylbut-2-en-1-yl diphosphate synthase (flavodoxin)">
    <location>
        <begin position="1"/>
        <end position="344"/>
    </location>
</feature>
<feature type="binding site" evidence="1">
    <location>
        <position position="253"/>
    </location>
    <ligand>
        <name>[4Fe-4S] cluster</name>
        <dbReference type="ChEBI" id="CHEBI:49883"/>
    </ligand>
</feature>
<feature type="binding site" evidence="1">
    <location>
        <position position="256"/>
    </location>
    <ligand>
        <name>[4Fe-4S] cluster</name>
        <dbReference type="ChEBI" id="CHEBI:49883"/>
    </ligand>
</feature>
<feature type="binding site" evidence="1">
    <location>
        <position position="288"/>
    </location>
    <ligand>
        <name>[4Fe-4S] cluster</name>
        <dbReference type="ChEBI" id="CHEBI:49883"/>
    </ligand>
</feature>
<feature type="binding site" evidence="1">
    <location>
        <position position="295"/>
    </location>
    <ligand>
        <name>[4Fe-4S] cluster</name>
        <dbReference type="ChEBI" id="CHEBI:49883"/>
    </ligand>
</feature>
<gene>
    <name evidence="1" type="primary">ispG</name>
    <name type="ordered locus">Tpet_0036</name>
</gene>
<name>ISPG_THEP1</name>
<evidence type="ECO:0000255" key="1">
    <source>
        <dbReference type="HAMAP-Rule" id="MF_00159"/>
    </source>
</evidence>
<reference key="1">
    <citation type="submission" date="2007-05" db="EMBL/GenBank/DDBJ databases">
        <title>Complete sequence of Thermotoga petrophila RKU-1.</title>
        <authorList>
            <consortium name="US DOE Joint Genome Institute"/>
            <person name="Copeland A."/>
            <person name="Lucas S."/>
            <person name="Lapidus A."/>
            <person name="Barry K."/>
            <person name="Glavina del Rio T."/>
            <person name="Dalin E."/>
            <person name="Tice H."/>
            <person name="Pitluck S."/>
            <person name="Sims D."/>
            <person name="Brettin T."/>
            <person name="Bruce D."/>
            <person name="Detter J.C."/>
            <person name="Han C."/>
            <person name="Tapia R."/>
            <person name="Schmutz J."/>
            <person name="Larimer F."/>
            <person name="Land M."/>
            <person name="Hauser L."/>
            <person name="Kyrpides N."/>
            <person name="Mikhailova N."/>
            <person name="Nelson K."/>
            <person name="Gogarten J.P."/>
            <person name="Noll K."/>
            <person name="Richardson P."/>
        </authorList>
    </citation>
    <scope>NUCLEOTIDE SEQUENCE [LARGE SCALE GENOMIC DNA]</scope>
    <source>
        <strain>ATCC BAA-488 / DSM 13995 / JCM 10881 / RKU-1</strain>
    </source>
</reference>
<dbReference type="EC" id="1.17.7.3" evidence="1"/>
<dbReference type="EMBL" id="CP000702">
    <property type="protein sequence ID" value="ABQ46065.1"/>
    <property type="molecule type" value="Genomic_DNA"/>
</dbReference>
<dbReference type="RefSeq" id="WP_011942742.1">
    <property type="nucleotide sequence ID" value="NC_009486.1"/>
</dbReference>
<dbReference type="SMR" id="A5IIP2"/>
<dbReference type="STRING" id="390874.Tpet_0036"/>
<dbReference type="KEGG" id="tpt:Tpet_0036"/>
<dbReference type="eggNOG" id="COG0821">
    <property type="taxonomic scope" value="Bacteria"/>
</dbReference>
<dbReference type="HOGENOM" id="CLU_042258_0_0_0"/>
<dbReference type="UniPathway" id="UPA00056">
    <property type="reaction ID" value="UER00096"/>
</dbReference>
<dbReference type="Proteomes" id="UP000006558">
    <property type="component" value="Chromosome"/>
</dbReference>
<dbReference type="GO" id="GO:0051539">
    <property type="term" value="F:4 iron, 4 sulfur cluster binding"/>
    <property type="evidence" value="ECO:0007669"/>
    <property type="project" value="UniProtKB-UniRule"/>
</dbReference>
<dbReference type="GO" id="GO:0046429">
    <property type="term" value="F:4-hydroxy-3-methylbut-2-en-1-yl diphosphate synthase activity (ferredoxin)"/>
    <property type="evidence" value="ECO:0007669"/>
    <property type="project" value="UniProtKB-UniRule"/>
</dbReference>
<dbReference type="GO" id="GO:0141197">
    <property type="term" value="F:4-hydroxy-3-methylbut-2-enyl-diphosphate synthase activity (flavodoxin)"/>
    <property type="evidence" value="ECO:0007669"/>
    <property type="project" value="UniProtKB-EC"/>
</dbReference>
<dbReference type="GO" id="GO:0005506">
    <property type="term" value="F:iron ion binding"/>
    <property type="evidence" value="ECO:0007669"/>
    <property type="project" value="InterPro"/>
</dbReference>
<dbReference type="GO" id="GO:0019288">
    <property type="term" value="P:isopentenyl diphosphate biosynthetic process, methylerythritol 4-phosphate pathway"/>
    <property type="evidence" value="ECO:0007669"/>
    <property type="project" value="UniProtKB-UniRule"/>
</dbReference>
<dbReference type="GO" id="GO:0016114">
    <property type="term" value="P:terpenoid biosynthetic process"/>
    <property type="evidence" value="ECO:0007669"/>
    <property type="project" value="InterPro"/>
</dbReference>
<dbReference type="FunFam" id="3.20.20.20:FF:000001">
    <property type="entry name" value="4-hydroxy-3-methylbut-2-en-1-yl diphosphate synthase (flavodoxin)"/>
    <property type="match status" value="1"/>
</dbReference>
<dbReference type="Gene3D" id="3.20.20.20">
    <property type="entry name" value="Dihydropteroate synthase-like"/>
    <property type="match status" value="1"/>
</dbReference>
<dbReference type="Gene3D" id="3.30.413.10">
    <property type="entry name" value="Sulfite Reductase Hemoprotein, domain 1"/>
    <property type="match status" value="1"/>
</dbReference>
<dbReference type="HAMAP" id="MF_00159">
    <property type="entry name" value="IspG"/>
    <property type="match status" value="1"/>
</dbReference>
<dbReference type="InterPro" id="IPR011005">
    <property type="entry name" value="Dihydropteroate_synth-like_sf"/>
</dbReference>
<dbReference type="InterPro" id="IPR016425">
    <property type="entry name" value="IspG_bac"/>
</dbReference>
<dbReference type="InterPro" id="IPR004588">
    <property type="entry name" value="IspG_bac-typ"/>
</dbReference>
<dbReference type="InterPro" id="IPR045854">
    <property type="entry name" value="NO2/SO3_Rdtase_4Fe4S_sf"/>
</dbReference>
<dbReference type="NCBIfam" id="TIGR00612">
    <property type="entry name" value="ispG_gcpE"/>
    <property type="match status" value="1"/>
</dbReference>
<dbReference type="NCBIfam" id="NF001540">
    <property type="entry name" value="PRK00366.1"/>
    <property type="match status" value="1"/>
</dbReference>
<dbReference type="PANTHER" id="PTHR30454">
    <property type="entry name" value="4-HYDROXY-3-METHYLBUT-2-EN-1-YL DIPHOSPHATE SYNTHASE"/>
    <property type="match status" value="1"/>
</dbReference>
<dbReference type="PANTHER" id="PTHR30454:SF0">
    <property type="entry name" value="4-HYDROXY-3-METHYLBUT-2-EN-1-YL DIPHOSPHATE SYNTHASE (FERREDOXIN), CHLOROPLASTIC"/>
    <property type="match status" value="1"/>
</dbReference>
<dbReference type="Pfam" id="PF04551">
    <property type="entry name" value="GcpE"/>
    <property type="match status" value="1"/>
</dbReference>
<dbReference type="PIRSF" id="PIRSF004640">
    <property type="entry name" value="IspG"/>
    <property type="match status" value="1"/>
</dbReference>
<dbReference type="SUPFAM" id="SSF51717">
    <property type="entry name" value="Dihydropteroate synthetase-like"/>
    <property type="match status" value="1"/>
</dbReference>
<dbReference type="SUPFAM" id="SSF56014">
    <property type="entry name" value="Nitrite and sulphite reductase 4Fe-4S domain-like"/>
    <property type="match status" value="1"/>
</dbReference>
<protein>
    <recommendedName>
        <fullName evidence="1">4-hydroxy-3-methylbut-2-en-1-yl diphosphate synthase (flavodoxin)</fullName>
        <ecNumber evidence="1">1.17.7.3</ecNumber>
    </recommendedName>
    <alternativeName>
        <fullName evidence="1">1-hydroxy-2-methyl-2-(E)-butenyl 4-diphosphate synthase</fullName>
    </alternativeName>
</protein>